<protein>
    <recommendedName>
        <fullName evidence="1">5'-nucleotidase SurE</fullName>
        <ecNumber evidence="1">3.1.3.5</ecNumber>
    </recommendedName>
    <alternativeName>
        <fullName evidence="1">Nucleoside 5'-monophosphate phosphohydrolase</fullName>
    </alternativeName>
</protein>
<reference key="1">
    <citation type="journal article" date="2005" name="PLoS Biol.">
        <title>The Wolbachia genome of Brugia malayi: endosymbiont evolution within a human pathogenic nematode.</title>
        <authorList>
            <person name="Foster J."/>
            <person name="Ganatra M."/>
            <person name="Kamal I."/>
            <person name="Ware J."/>
            <person name="Makarova K."/>
            <person name="Ivanova N."/>
            <person name="Bhattacharyya A."/>
            <person name="Kapatral V."/>
            <person name="Kumar S."/>
            <person name="Posfai J."/>
            <person name="Vincze T."/>
            <person name="Ingram J."/>
            <person name="Moran L."/>
            <person name="Lapidus A."/>
            <person name="Omelchenko M."/>
            <person name="Kyrpides N."/>
            <person name="Ghedin E."/>
            <person name="Wang S."/>
            <person name="Goltsman E."/>
            <person name="Joukov V."/>
            <person name="Ostrovskaya O."/>
            <person name="Tsukerman K."/>
            <person name="Mazur M."/>
            <person name="Comb D."/>
            <person name="Koonin E."/>
            <person name="Slatko B."/>
        </authorList>
    </citation>
    <scope>NUCLEOTIDE SEQUENCE [LARGE SCALE GENOMIC DNA]</scope>
    <source>
        <strain>TRS</strain>
    </source>
</reference>
<proteinExistence type="inferred from homology"/>
<feature type="chain" id="PRO_0000235668" description="5'-nucleotidase SurE">
    <location>
        <begin position="1"/>
        <end position="250"/>
    </location>
</feature>
<feature type="binding site" evidence="1">
    <location>
        <position position="8"/>
    </location>
    <ligand>
        <name>a divalent metal cation</name>
        <dbReference type="ChEBI" id="CHEBI:60240"/>
    </ligand>
</feature>
<feature type="binding site" evidence="1">
    <location>
        <position position="9"/>
    </location>
    <ligand>
        <name>a divalent metal cation</name>
        <dbReference type="ChEBI" id="CHEBI:60240"/>
    </ligand>
</feature>
<feature type="binding site" evidence="1">
    <location>
        <position position="40"/>
    </location>
    <ligand>
        <name>a divalent metal cation</name>
        <dbReference type="ChEBI" id="CHEBI:60240"/>
    </ligand>
</feature>
<feature type="binding site" evidence="1">
    <location>
        <position position="94"/>
    </location>
    <ligand>
        <name>a divalent metal cation</name>
        <dbReference type="ChEBI" id="CHEBI:60240"/>
    </ligand>
</feature>
<accession>Q5GS87</accession>
<name>SURE_WOLTR</name>
<organism>
    <name type="scientific">Wolbachia sp. subsp. Brugia malayi (strain TRS)</name>
    <dbReference type="NCBI Taxonomy" id="292805"/>
    <lineage>
        <taxon>Bacteria</taxon>
        <taxon>Pseudomonadati</taxon>
        <taxon>Pseudomonadota</taxon>
        <taxon>Alphaproteobacteria</taxon>
        <taxon>Rickettsiales</taxon>
        <taxon>Anaplasmataceae</taxon>
        <taxon>Wolbachieae</taxon>
        <taxon>Wolbachia</taxon>
    </lineage>
</organism>
<keyword id="KW-0963">Cytoplasm</keyword>
<keyword id="KW-0378">Hydrolase</keyword>
<keyword id="KW-0479">Metal-binding</keyword>
<keyword id="KW-0547">Nucleotide-binding</keyword>
<keyword id="KW-1185">Reference proteome</keyword>
<dbReference type="EC" id="3.1.3.5" evidence="1"/>
<dbReference type="EMBL" id="AE017321">
    <property type="protein sequence ID" value="AAW71137.1"/>
    <property type="molecule type" value="Genomic_DNA"/>
</dbReference>
<dbReference type="RefSeq" id="WP_011256747.1">
    <property type="nucleotide sequence ID" value="NC_006833.1"/>
</dbReference>
<dbReference type="SMR" id="Q5GS87"/>
<dbReference type="STRING" id="292805.Wbm0549"/>
<dbReference type="KEGG" id="wbm:Wbm0549"/>
<dbReference type="eggNOG" id="COG0496">
    <property type="taxonomic scope" value="Bacteria"/>
</dbReference>
<dbReference type="HOGENOM" id="CLU_045192_1_2_5"/>
<dbReference type="Proteomes" id="UP000000534">
    <property type="component" value="Chromosome"/>
</dbReference>
<dbReference type="GO" id="GO:0005737">
    <property type="term" value="C:cytoplasm"/>
    <property type="evidence" value="ECO:0007669"/>
    <property type="project" value="UniProtKB-SubCell"/>
</dbReference>
<dbReference type="GO" id="GO:0008254">
    <property type="term" value="F:3'-nucleotidase activity"/>
    <property type="evidence" value="ECO:0007669"/>
    <property type="project" value="TreeGrafter"/>
</dbReference>
<dbReference type="GO" id="GO:0008253">
    <property type="term" value="F:5'-nucleotidase activity"/>
    <property type="evidence" value="ECO:0007669"/>
    <property type="project" value="UniProtKB-UniRule"/>
</dbReference>
<dbReference type="GO" id="GO:0004309">
    <property type="term" value="F:exopolyphosphatase activity"/>
    <property type="evidence" value="ECO:0007669"/>
    <property type="project" value="TreeGrafter"/>
</dbReference>
<dbReference type="GO" id="GO:0046872">
    <property type="term" value="F:metal ion binding"/>
    <property type="evidence" value="ECO:0007669"/>
    <property type="project" value="UniProtKB-UniRule"/>
</dbReference>
<dbReference type="GO" id="GO:0000166">
    <property type="term" value="F:nucleotide binding"/>
    <property type="evidence" value="ECO:0007669"/>
    <property type="project" value="UniProtKB-KW"/>
</dbReference>
<dbReference type="Gene3D" id="3.40.1210.10">
    <property type="entry name" value="Survival protein SurE-like phosphatase/nucleotidase"/>
    <property type="match status" value="1"/>
</dbReference>
<dbReference type="HAMAP" id="MF_00060">
    <property type="entry name" value="SurE"/>
    <property type="match status" value="1"/>
</dbReference>
<dbReference type="InterPro" id="IPR030048">
    <property type="entry name" value="SurE"/>
</dbReference>
<dbReference type="InterPro" id="IPR002828">
    <property type="entry name" value="SurE-like_Pase/nucleotidase"/>
</dbReference>
<dbReference type="InterPro" id="IPR036523">
    <property type="entry name" value="SurE-like_sf"/>
</dbReference>
<dbReference type="NCBIfam" id="NF001490">
    <property type="entry name" value="PRK00346.1-4"/>
    <property type="match status" value="1"/>
</dbReference>
<dbReference type="NCBIfam" id="TIGR00087">
    <property type="entry name" value="surE"/>
    <property type="match status" value="1"/>
</dbReference>
<dbReference type="PANTHER" id="PTHR30457">
    <property type="entry name" value="5'-NUCLEOTIDASE SURE"/>
    <property type="match status" value="1"/>
</dbReference>
<dbReference type="PANTHER" id="PTHR30457:SF12">
    <property type="entry name" value="5'_3'-NUCLEOTIDASE SURE"/>
    <property type="match status" value="1"/>
</dbReference>
<dbReference type="Pfam" id="PF01975">
    <property type="entry name" value="SurE"/>
    <property type="match status" value="1"/>
</dbReference>
<dbReference type="SUPFAM" id="SSF64167">
    <property type="entry name" value="SurE-like"/>
    <property type="match status" value="1"/>
</dbReference>
<evidence type="ECO:0000255" key="1">
    <source>
        <dbReference type="HAMAP-Rule" id="MF_00060"/>
    </source>
</evidence>
<sequence>MIILITNDDGFESEGIKLLKEVARNFASEIWIVAPDTDRSGAARSLDHPVKQSIRINQHNEREFSVSGTPADCVIIALNKIMDKKPDLVLSGVNIGSNVGDDVCYSGTIGAVMEGAARSIPSIALSQAYHGGINWYNTKIFAPKVIAKLVKVGWPKNIAMSINFSATEKVKGVEFAEQGEYNIDGDLTFTENPDGSLSLNWSREHLGSGSVGKIKEGFITITPIKLDFTDYDTLNAMKNSYAEEFSSIVN</sequence>
<gene>
    <name evidence="1" type="primary">surE</name>
    <name type="ordered locus">Wbm0549</name>
</gene>
<comment type="function">
    <text evidence="1">Nucleotidase that shows phosphatase activity on nucleoside 5'-monophosphates.</text>
</comment>
<comment type="catalytic activity">
    <reaction evidence="1">
        <text>a ribonucleoside 5'-phosphate + H2O = a ribonucleoside + phosphate</text>
        <dbReference type="Rhea" id="RHEA:12484"/>
        <dbReference type="ChEBI" id="CHEBI:15377"/>
        <dbReference type="ChEBI" id="CHEBI:18254"/>
        <dbReference type="ChEBI" id="CHEBI:43474"/>
        <dbReference type="ChEBI" id="CHEBI:58043"/>
        <dbReference type="EC" id="3.1.3.5"/>
    </reaction>
</comment>
<comment type="cofactor">
    <cofactor evidence="1">
        <name>a divalent metal cation</name>
        <dbReference type="ChEBI" id="CHEBI:60240"/>
    </cofactor>
    <text evidence="1">Binds 1 divalent metal cation per subunit.</text>
</comment>
<comment type="subcellular location">
    <subcellularLocation>
        <location evidence="1">Cytoplasm</location>
    </subcellularLocation>
</comment>
<comment type="similarity">
    <text evidence="1">Belongs to the SurE nucleotidase family.</text>
</comment>